<gene>
    <name evidence="1" type="primary">dapB</name>
    <name type="ordered locus">ESA_03300</name>
</gene>
<organism>
    <name type="scientific">Cronobacter sakazakii (strain ATCC BAA-894)</name>
    <name type="common">Enterobacter sakazakii</name>
    <dbReference type="NCBI Taxonomy" id="290339"/>
    <lineage>
        <taxon>Bacteria</taxon>
        <taxon>Pseudomonadati</taxon>
        <taxon>Pseudomonadota</taxon>
        <taxon>Gammaproteobacteria</taxon>
        <taxon>Enterobacterales</taxon>
        <taxon>Enterobacteriaceae</taxon>
        <taxon>Cronobacter</taxon>
    </lineage>
</organism>
<comment type="function">
    <text evidence="1">Catalyzes the conversion of 4-hydroxy-tetrahydrodipicolinate (HTPA) to tetrahydrodipicolinate.</text>
</comment>
<comment type="catalytic activity">
    <reaction evidence="1">
        <text>(S)-2,3,4,5-tetrahydrodipicolinate + NAD(+) + H2O = (2S,4S)-4-hydroxy-2,3,4,5-tetrahydrodipicolinate + NADH + H(+)</text>
        <dbReference type="Rhea" id="RHEA:35323"/>
        <dbReference type="ChEBI" id="CHEBI:15377"/>
        <dbReference type="ChEBI" id="CHEBI:15378"/>
        <dbReference type="ChEBI" id="CHEBI:16845"/>
        <dbReference type="ChEBI" id="CHEBI:57540"/>
        <dbReference type="ChEBI" id="CHEBI:57945"/>
        <dbReference type="ChEBI" id="CHEBI:67139"/>
        <dbReference type="EC" id="1.17.1.8"/>
    </reaction>
</comment>
<comment type="catalytic activity">
    <reaction evidence="1">
        <text>(S)-2,3,4,5-tetrahydrodipicolinate + NADP(+) + H2O = (2S,4S)-4-hydroxy-2,3,4,5-tetrahydrodipicolinate + NADPH + H(+)</text>
        <dbReference type="Rhea" id="RHEA:35331"/>
        <dbReference type="ChEBI" id="CHEBI:15377"/>
        <dbReference type="ChEBI" id="CHEBI:15378"/>
        <dbReference type="ChEBI" id="CHEBI:16845"/>
        <dbReference type="ChEBI" id="CHEBI:57783"/>
        <dbReference type="ChEBI" id="CHEBI:58349"/>
        <dbReference type="ChEBI" id="CHEBI:67139"/>
        <dbReference type="EC" id="1.17.1.8"/>
    </reaction>
</comment>
<comment type="pathway">
    <text evidence="1">Amino-acid biosynthesis; L-lysine biosynthesis via DAP pathway; (S)-tetrahydrodipicolinate from L-aspartate: step 4/4.</text>
</comment>
<comment type="subunit">
    <text evidence="1">Homotetramer.</text>
</comment>
<comment type="subcellular location">
    <subcellularLocation>
        <location evidence="1">Cytoplasm</location>
    </subcellularLocation>
</comment>
<comment type="similarity">
    <text evidence="1">Belongs to the DapB family.</text>
</comment>
<comment type="caution">
    <text evidence="2">Was originally thought to be a dihydrodipicolinate reductase (DHDPR), catalyzing the conversion of dihydrodipicolinate to tetrahydrodipicolinate. However, it was shown in E.coli that the substrate of the enzymatic reaction is not dihydrodipicolinate (DHDP) but in fact (2S,4S)-4-hydroxy-2,3,4,5-tetrahydrodipicolinic acid (HTPA), the product released by the DapA-catalyzed reaction.</text>
</comment>
<name>DAPB_CROS8</name>
<sequence>MQEAQVRVAIAGANGRMGRQLIQAALAMDGVALGAALVREGSTLLGADAGELAGTGATGVTLKSNLEAVKDDFDVLIDFTRPEGTLAYLAFCRAHNKGMVIGTTGFDDAGKAAIHETATAIPVVFAANFSVGVNVMLKLLEKAAQVMGDYTDIEIIEAHHRHKVDAPSGTALAMGEAIAGALNKDLKSCAVYAREGYTGERVPGTIGFATVRAGDIVGEHTAMFADIGERIEITHKASSRMTFANGAVRAALWLKAQKKGFFDMRDVLNLNDL</sequence>
<feature type="chain" id="PRO_1000008564" description="4-hydroxy-tetrahydrodipicolinate reductase">
    <location>
        <begin position="1"/>
        <end position="273"/>
    </location>
</feature>
<feature type="active site" description="Proton donor/acceptor" evidence="1">
    <location>
        <position position="159"/>
    </location>
</feature>
<feature type="active site" description="Proton donor" evidence="1">
    <location>
        <position position="163"/>
    </location>
</feature>
<feature type="binding site" evidence="1">
    <location>
        <begin position="12"/>
        <end position="17"/>
    </location>
    <ligand>
        <name>NAD(+)</name>
        <dbReference type="ChEBI" id="CHEBI:57540"/>
    </ligand>
</feature>
<feature type="binding site" evidence="1">
    <location>
        <position position="39"/>
    </location>
    <ligand>
        <name>NADP(+)</name>
        <dbReference type="ChEBI" id="CHEBI:58349"/>
    </ligand>
</feature>
<feature type="binding site" evidence="1">
    <location>
        <begin position="102"/>
        <end position="104"/>
    </location>
    <ligand>
        <name>NAD(+)</name>
        <dbReference type="ChEBI" id="CHEBI:57540"/>
    </ligand>
</feature>
<feature type="binding site" evidence="1">
    <location>
        <begin position="126"/>
        <end position="129"/>
    </location>
    <ligand>
        <name>NAD(+)</name>
        <dbReference type="ChEBI" id="CHEBI:57540"/>
    </ligand>
</feature>
<feature type="binding site" evidence="1">
    <location>
        <position position="160"/>
    </location>
    <ligand>
        <name>(S)-2,3,4,5-tetrahydrodipicolinate</name>
        <dbReference type="ChEBI" id="CHEBI:16845"/>
    </ligand>
</feature>
<feature type="binding site" evidence="1">
    <location>
        <begin position="169"/>
        <end position="170"/>
    </location>
    <ligand>
        <name>(S)-2,3,4,5-tetrahydrodipicolinate</name>
        <dbReference type="ChEBI" id="CHEBI:16845"/>
    </ligand>
</feature>
<accession>A7MI96</accession>
<keyword id="KW-0028">Amino-acid biosynthesis</keyword>
<keyword id="KW-0963">Cytoplasm</keyword>
<keyword id="KW-0220">Diaminopimelate biosynthesis</keyword>
<keyword id="KW-0457">Lysine biosynthesis</keyword>
<keyword id="KW-0520">NAD</keyword>
<keyword id="KW-0521">NADP</keyword>
<keyword id="KW-0560">Oxidoreductase</keyword>
<keyword id="KW-1185">Reference proteome</keyword>
<proteinExistence type="inferred from homology"/>
<protein>
    <recommendedName>
        <fullName evidence="1">4-hydroxy-tetrahydrodipicolinate reductase</fullName>
        <shortName evidence="1">HTPA reductase</shortName>
        <ecNumber evidence="1">1.17.1.8</ecNumber>
    </recommendedName>
</protein>
<evidence type="ECO:0000255" key="1">
    <source>
        <dbReference type="HAMAP-Rule" id="MF_00102"/>
    </source>
</evidence>
<evidence type="ECO:0000305" key="2"/>
<dbReference type="EC" id="1.17.1.8" evidence="1"/>
<dbReference type="EMBL" id="CP000783">
    <property type="protein sequence ID" value="ABU78521.1"/>
    <property type="molecule type" value="Genomic_DNA"/>
</dbReference>
<dbReference type="RefSeq" id="WP_012125793.1">
    <property type="nucleotide sequence ID" value="NC_009778.1"/>
</dbReference>
<dbReference type="SMR" id="A7MI96"/>
<dbReference type="KEGG" id="esa:ESA_03300"/>
<dbReference type="PATRIC" id="fig|290339.8.peg.2928"/>
<dbReference type="HOGENOM" id="CLU_047479_2_1_6"/>
<dbReference type="UniPathway" id="UPA00034">
    <property type="reaction ID" value="UER00018"/>
</dbReference>
<dbReference type="Proteomes" id="UP000000260">
    <property type="component" value="Chromosome"/>
</dbReference>
<dbReference type="GO" id="GO:0005829">
    <property type="term" value="C:cytosol"/>
    <property type="evidence" value="ECO:0007669"/>
    <property type="project" value="TreeGrafter"/>
</dbReference>
<dbReference type="GO" id="GO:0008839">
    <property type="term" value="F:4-hydroxy-tetrahydrodipicolinate reductase"/>
    <property type="evidence" value="ECO:0007669"/>
    <property type="project" value="UniProtKB-EC"/>
</dbReference>
<dbReference type="GO" id="GO:0051287">
    <property type="term" value="F:NAD binding"/>
    <property type="evidence" value="ECO:0007669"/>
    <property type="project" value="UniProtKB-UniRule"/>
</dbReference>
<dbReference type="GO" id="GO:0050661">
    <property type="term" value="F:NADP binding"/>
    <property type="evidence" value="ECO:0007669"/>
    <property type="project" value="UniProtKB-UniRule"/>
</dbReference>
<dbReference type="GO" id="GO:0016726">
    <property type="term" value="F:oxidoreductase activity, acting on CH or CH2 groups, NAD or NADP as acceptor"/>
    <property type="evidence" value="ECO:0007669"/>
    <property type="project" value="UniProtKB-UniRule"/>
</dbReference>
<dbReference type="GO" id="GO:0019877">
    <property type="term" value="P:diaminopimelate biosynthetic process"/>
    <property type="evidence" value="ECO:0007669"/>
    <property type="project" value="UniProtKB-UniRule"/>
</dbReference>
<dbReference type="GO" id="GO:0009089">
    <property type="term" value="P:lysine biosynthetic process via diaminopimelate"/>
    <property type="evidence" value="ECO:0007669"/>
    <property type="project" value="UniProtKB-UniRule"/>
</dbReference>
<dbReference type="CDD" id="cd02274">
    <property type="entry name" value="DHDPR_N"/>
    <property type="match status" value="1"/>
</dbReference>
<dbReference type="FunFam" id="3.30.360.10:FF:000004">
    <property type="entry name" value="4-hydroxy-tetrahydrodipicolinate reductase"/>
    <property type="match status" value="1"/>
</dbReference>
<dbReference type="FunFam" id="3.40.50.720:FF:000048">
    <property type="entry name" value="4-hydroxy-tetrahydrodipicolinate reductase"/>
    <property type="match status" value="1"/>
</dbReference>
<dbReference type="Gene3D" id="3.30.360.10">
    <property type="entry name" value="Dihydrodipicolinate Reductase, domain 2"/>
    <property type="match status" value="1"/>
</dbReference>
<dbReference type="Gene3D" id="3.40.50.720">
    <property type="entry name" value="NAD(P)-binding Rossmann-like Domain"/>
    <property type="match status" value="1"/>
</dbReference>
<dbReference type="HAMAP" id="MF_00102">
    <property type="entry name" value="DapB"/>
    <property type="match status" value="1"/>
</dbReference>
<dbReference type="InterPro" id="IPR022663">
    <property type="entry name" value="DapB_C"/>
</dbReference>
<dbReference type="InterPro" id="IPR000846">
    <property type="entry name" value="DapB_N"/>
</dbReference>
<dbReference type="InterPro" id="IPR022664">
    <property type="entry name" value="DapB_N_CS"/>
</dbReference>
<dbReference type="InterPro" id="IPR023940">
    <property type="entry name" value="DHDPR_bac"/>
</dbReference>
<dbReference type="InterPro" id="IPR036291">
    <property type="entry name" value="NAD(P)-bd_dom_sf"/>
</dbReference>
<dbReference type="NCBIfam" id="TIGR00036">
    <property type="entry name" value="dapB"/>
    <property type="match status" value="1"/>
</dbReference>
<dbReference type="PANTHER" id="PTHR20836:SF0">
    <property type="entry name" value="4-HYDROXY-TETRAHYDRODIPICOLINATE REDUCTASE 1, CHLOROPLASTIC-RELATED"/>
    <property type="match status" value="1"/>
</dbReference>
<dbReference type="PANTHER" id="PTHR20836">
    <property type="entry name" value="DIHYDRODIPICOLINATE REDUCTASE"/>
    <property type="match status" value="1"/>
</dbReference>
<dbReference type="Pfam" id="PF05173">
    <property type="entry name" value="DapB_C"/>
    <property type="match status" value="1"/>
</dbReference>
<dbReference type="Pfam" id="PF01113">
    <property type="entry name" value="DapB_N"/>
    <property type="match status" value="1"/>
</dbReference>
<dbReference type="PIRSF" id="PIRSF000161">
    <property type="entry name" value="DHPR"/>
    <property type="match status" value="1"/>
</dbReference>
<dbReference type="SUPFAM" id="SSF55347">
    <property type="entry name" value="Glyceraldehyde-3-phosphate dehydrogenase-like, C-terminal domain"/>
    <property type="match status" value="1"/>
</dbReference>
<dbReference type="SUPFAM" id="SSF51735">
    <property type="entry name" value="NAD(P)-binding Rossmann-fold domains"/>
    <property type="match status" value="1"/>
</dbReference>
<dbReference type="PROSITE" id="PS01298">
    <property type="entry name" value="DAPB"/>
    <property type="match status" value="1"/>
</dbReference>
<reference key="1">
    <citation type="journal article" date="2010" name="PLoS ONE">
        <title>Genome sequence of Cronobacter sakazakii BAA-894 and comparative genomic hybridization analysis with other Cronobacter species.</title>
        <authorList>
            <person name="Kucerova E."/>
            <person name="Clifton S.W."/>
            <person name="Xia X.Q."/>
            <person name="Long F."/>
            <person name="Porwollik S."/>
            <person name="Fulton L."/>
            <person name="Fronick C."/>
            <person name="Minx P."/>
            <person name="Kyung K."/>
            <person name="Warren W."/>
            <person name="Fulton R."/>
            <person name="Feng D."/>
            <person name="Wollam A."/>
            <person name="Shah N."/>
            <person name="Bhonagiri V."/>
            <person name="Nash W.E."/>
            <person name="Hallsworth-Pepin K."/>
            <person name="Wilson R.K."/>
            <person name="McClelland M."/>
            <person name="Forsythe S.J."/>
        </authorList>
    </citation>
    <scope>NUCLEOTIDE SEQUENCE [LARGE SCALE GENOMIC DNA]</scope>
    <source>
        <strain>ATCC BAA-894</strain>
    </source>
</reference>